<gene>
    <name type="primary">spb1</name>
    <name type="ORF">68B2.180</name>
    <name type="ORF">NCU03669</name>
</gene>
<keyword id="KW-0175">Coiled coil</keyword>
<keyword id="KW-0489">Methyltransferase</keyword>
<keyword id="KW-0539">Nucleus</keyword>
<keyword id="KW-1185">Reference proteome</keyword>
<keyword id="KW-0690">Ribosome biogenesis</keyword>
<keyword id="KW-0698">rRNA processing</keyword>
<keyword id="KW-0949">S-adenosyl-L-methionine</keyword>
<keyword id="KW-0808">Transferase</keyword>
<accession>Q9P6V8</accession>
<accession>Q1K813</accession>
<dbReference type="EC" id="2.1.1.-" evidence="1"/>
<dbReference type="EMBL" id="AL353821">
    <property type="protein sequence ID" value="CAB88626.2"/>
    <property type="molecule type" value="Genomic_DNA"/>
</dbReference>
<dbReference type="EMBL" id="CM002240">
    <property type="protein sequence ID" value="EAA32209.1"/>
    <property type="molecule type" value="Genomic_DNA"/>
</dbReference>
<dbReference type="PIR" id="T48834">
    <property type="entry name" value="T48834"/>
</dbReference>
<dbReference type="RefSeq" id="XP_961445.1">
    <property type="nucleotide sequence ID" value="XM_956352.2"/>
</dbReference>
<dbReference type="SMR" id="Q9P6V8"/>
<dbReference type="FunCoup" id="Q9P6V8">
    <property type="interactions" value="1056"/>
</dbReference>
<dbReference type="STRING" id="367110.Q9P6V8"/>
<dbReference type="PaxDb" id="5141-EFNCRP00000003395"/>
<dbReference type="EnsemblFungi" id="EAA32209">
    <property type="protein sequence ID" value="EAA32209"/>
    <property type="gene ID" value="NCU03669"/>
</dbReference>
<dbReference type="GeneID" id="3877666"/>
<dbReference type="KEGG" id="ncr:NCU03669"/>
<dbReference type="VEuPathDB" id="FungiDB:NCU03669"/>
<dbReference type="HOGENOM" id="CLU_009422_8_1_1"/>
<dbReference type="InParanoid" id="Q9P6V8"/>
<dbReference type="OMA" id="QRKDKYY"/>
<dbReference type="OrthoDB" id="1287559at2759"/>
<dbReference type="Proteomes" id="UP000001805">
    <property type="component" value="Chromosome 2, Linkage Group V"/>
</dbReference>
<dbReference type="GO" id="GO:0005730">
    <property type="term" value="C:nucleolus"/>
    <property type="evidence" value="ECO:0000318"/>
    <property type="project" value="GO_Central"/>
</dbReference>
<dbReference type="GO" id="GO:0030687">
    <property type="term" value="C:preribosome, large subunit precursor"/>
    <property type="evidence" value="ECO:0000318"/>
    <property type="project" value="GO_Central"/>
</dbReference>
<dbReference type="GO" id="GO:0016435">
    <property type="term" value="F:rRNA (guanine) methyltransferase activity"/>
    <property type="evidence" value="ECO:0000318"/>
    <property type="project" value="GO_Central"/>
</dbReference>
<dbReference type="GO" id="GO:0070039">
    <property type="term" value="F:rRNA (guanosine-2'-O-)-methyltransferase activity"/>
    <property type="evidence" value="ECO:0007669"/>
    <property type="project" value="UniProtKB-UniRule"/>
</dbReference>
<dbReference type="GO" id="GO:0008650">
    <property type="term" value="F:rRNA (uridine-2'-O-)-methyltransferase activity"/>
    <property type="evidence" value="ECO:0000318"/>
    <property type="project" value="GO_Central"/>
</dbReference>
<dbReference type="GO" id="GO:0000466">
    <property type="term" value="P:maturation of 5.8S rRNA from tricistronic rRNA transcript (SSU-rRNA, 5.8S rRNA, LSU-rRNA)"/>
    <property type="evidence" value="ECO:0000318"/>
    <property type="project" value="GO_Central"/>
</dbReference>
<dbReference type="GO" id="GO:0000463">
    <property type="term" value="P:maturation of LSU-rRNA from tricistronic rRNA transcript (SSU-rRNA, 5.8S rRNA, LSU-rRNA)"/>
    <property type="evidence" value="ECO:0000318"/>
    <property type="project" value="GO_Central"/>
</dbReference>
<dbReference type="GO" id="GO:0031167">
    <property type="term" value="P:rRNA methylation"/>
    <property type="evidence" value="ECO:0000318"/>
    <property type="project" value="GO_Central"/>
</dbReference>
<dbReference type="FunFam" id="3.40.50.150:FF:000004">
    <property type="entry name" value="AdoMet-dependent rRNA methyltransferase SPB1"/>
    <property type="match status" value="1"/>
</dbReference>
<dbReference type="Gene3D" id="3.40.50.150">
    <property type="entry name" value="Vaccinia Virus protein VP39"/>
    <property type="match status" value="1"/>
</dbReference>
<dbReference type="HAMAP" id="MF_01547">
    <property type="entry name" value="RNA_methyltr_E"/>
    <property type="match status" value="1"/>
</dbReference>
<dbReference type="HAMAP" id="MF_03163">
    <property type="entry name" value="RNA_methyltr_E_SPB1"/>
    <property type="match status" value="1"/>
</dbReference>
<dbReference type="InterPro" id="IPR050082">
    <property type="entry name" value="RNA_methyltr_RlmE"/>
</dbReference>
<dbReference type="InterPro" id="IPR002877">
    <property type="entry name" value="RNA_MeTrfase_FtsJ_dom"/>
</dbReference>
<dbReference type="InterPro" id="IPR015507">
    <property type="entry name" value="rRNA-MeTfrase_E"/>
</dbReference>
<dbReference type="InterPro" id="IPR012920">
    <property type="entry name" value="rRNA_MeTfrase_SPB1-like_C"/>
</dbReference>
<dbReference type="InterPro" id="IPR024576">
    <property type="entry name" value="rRNA_MeTfrase_Spb1_DUF3381"/>
</dbReference>
<dbReference type="InterPro" id="IPR029063">
    <property type="entry name" value="SAM-dependent_MTases_sf"/>
</dbReference>
<dbReference type="InterPro" id="IPR028589">
    <property type="entry name" value="SPB1-like"/>
</dbReference>
<dbReference type="PANTHER" id="PTHR10920:SF13">
    <property type="entry name" value="PRE-RRNA 2'-O-RIBOSE RNA METHYLTRANSFERASE FTSJ3"/>
    <property type="match status" value="1"/>
</dbReference>
<dbReference type="PANTHER" id="PTHR10920">
    <property type="entry name" value="RIBOSOMAL RNA METHYLTRANSFERASE"/>
    <property type="match status" value="1"/>
</dbReference>
<dbReference type="Pfam" id="PF11861">
    <property type="entry name" value="DUF3381"/>
    <property type="match status" value="1"/>
</dbReference>
<dbReference type="Pfam" id="PF01728">
    <property type="entry name" value="FtsJ"/>
    <property type="match status" value="1"/>
</dbReference>
<dbReference type="Pfam" id="PF07780">
    <property type="entry name" value="Spb1_C"/>
    <property type="match status" value="1"/>
</dbReference>
<dbReference type="SUPFAM" id="SSF53335">
    <property type="entry name" value="S-adenosyl-L-methionine-dependent methyltransferases"/>
    <property type="match status" value="1"/>
</dbReference>
<reference key="1">
    <citation type="journal article" date="2003" name="Nucleic Acids Res.">
        <title>What's in the genome of a filamentous fungus? Analysis of the Neurospora genome sequence.</title>
        <authorList>
            <person name="Mannhaupt G."/>
            <person name="Montrone C."/>
            <person name="Haase D."/>
            <person name="Mewes H.-W."/>
            <person name="Aign V."/>
            <person name="Hoheisel J.D."/>
            <person name="Fartmann B."/>
            <person name="Nyakatura G."/>
            <person name="Kempken F."/>
            <person name="Maier J."/>
            <person name="Schulte U."/>
        </authorList>
    </citation>
    <scope>NUCLEOTIDE SEQUENCE [LARGE SCALE GENOMIC DNA]</scope>
    <source>
        <strain>ATCC 24698 / 74-OR23-1A / CBS 708.71 / DSM 1257 / FGSC 987</strain>
    </source>
</reference>
<reference key="2">
    <citation type="journal article" date="2003" name="Nature">
        <title>The genome sequence of the filamentous fungus Neurospora crassa.</title>
        <authorList>
            <person name="Galagan J.E."/>
            <person name="Calvo S.E."/>
            <person name="Borkovich K.A."/>
            <person name="Selker E.U."/>
            <person name="Read N.D."/>
            <person name="Jaffe D.B."/>
            <person name="FitzHugh W."/>
            <person name="Ma L.-J."/>
            <person name="Smirnov S."/>
            <person name="Purcell S."/>
            <person name="Rehman B."/>
            <person name="Elkins T."/>
            <person name="Engels R."/>
            <person name="Wang S."/>
            <person name="Nielsen C.B."/>
            <person name="Butler J."/>
            <person name="Endrizzi M."/>
            <person name="Qui D."/>
            <person name="Ianakiev P."/>
            <person name="Bell-Pedersen D."/>
            <person name="Nelson M.A."/>
            <person name="Werner-Washburne M."/>
            <person name="Selitrennikoff C.P."/>
            <person name="Kinsey J.A."/>
            <person name="Braun E.L."/>
            <person name="Zelter A."/>
            <person name="Schulte U."/>
            <person name="Kothe G.O."/>
            <person name="Jedd G."/>
            <person name="Mewes H.-W."/>
            <person name="Staben C."/>
            <person name="Marcotte E."/>
            <person name="Greenberg D."/>
            <person name="Roy A."/>
            <person name="Foley K."/>
            <person name="Naylor J."/>
            <person name="Stange-Thomann N."/>
            <person name="Barrett R."/>
            <person name="Gnerre S."/>
            <person name="Kamal M."/>
            <person name="Kamvysselis M."/>
            <person name="Mauceli E.W."/>
            <person name="Bielke C."/>
            <person name="Rudd S."/>
            <person name="Frishman D."/>
            <person name="Krystofova S."/>
            <person name="Rasmussen C."/>
            <person name="Metzenberg R.L."/>
            <person name="Perkins D.D."/>
            <person name="Kroken S."/>
            <person name="Cogoni C."/>
            <person name="Macino G."/>
            <person name="Catcheside D.E.A."/>
            <person name="Li W."/>
            <person name="Pratt R.J."/>
            <person name="Osmani S.A."/>
            <person name="DeSouza C.P.C."/>
            <person name="Glass N.L."/>
            <person name="Orbach M.J."/>
            <person name="Berglund J.A."/>
            <person name="Voelker R."/>
            <person name="Yarden O."/>
            <person name="Plamann M."/>
            <person name="Seiler S."/>
            <person name="Dunlap J.C."/>
            <person name="Radford A."/>
            <person name="Aramayo R."/>
            <person name="Natvig D.O."/>
            <person name="Alex L.A."/>
            <person name="Mannhaupt G."/>
            <person name="Ebbole D.J."/>
            <person name="Freitag M."/>
            <person name="Paulsen I."/>
            <person name="Sachs M.S."/>
            <person name="Lander E.S."/>
            <person name="Nusbaum C."/>
            <person name="Birren B.W."/>
        </authorList>
    </citation>
    <scope>NUCLEOTIDE SEQUENCE [LARGE SCALE GENOMIC DNA]</scope>
    <source>
        <strain>ATCC 24698 / 74-OR23-1A / CBS 708.71 / DSM 1257 / FGSC 987</strain>
    </source>
</reference>
<sequence length="831" mass="93958">MAIQKKHGKGRLDKWYKLAKEKGYRARAAFKLIQLNKKYGFLEKSKVALDLCAAPGSWCQVCAETMPTNSIIIGVDLAPIKPIPKVITFQSDITTEKCRATIRSHLKTWKADVVLHDGAPNVGTAWVQDSYNQAELALHSLKLATEFLIEGGTFVTKVFRSKDYNSLLWVCNQLFAKVEATKPPSSRNVSAEIFVVCRGFKAPKRIDPKLLDPRSVFEDVAGPAPNNEAKVYNPEVKKRKREGYEEGDYTQFKEISASEFINTVDPIAILGQYNKLSFEQPKNGDVALAALDKLPETTEEIRLCCADLKVLGRKEFKLLLKWRLKVREIFGFPSKKTQKAAVDEEVAVVENMDEELRIQEELQRIKEKETSKKKRERRRENEKKQKEIVRMQMNMTAPMDIGVEQEGPRGEGAMFRLKTIDQNAALNKIAKGKMAVIKETEKPKDYDFGSDGETDESDEEADRLEEELDNLYDQYRERKAAADAKYRAKKARKENGDDEWEGVSGDEEKGSDDDDDEELEVDSSDDDSDSEDGESGKKLITDLDGQPEEKDGLSKRAKNFFSQGIFAEIPGLLEEPESEEEEAQEAELVEAVEDLKVTKKEKKEAKETKAKSKKAAEESDDDDDFEVVKNNEDDDWENVEKKKKNGRPDIDIITAEAMTLAHQLATGEKTSYDVIDDGYTKHAFKDRDGLPDWFLDDESKHDKPHKPITKAAAQAIKEKLRAYNARPIKKVAEAKARKKFKQAQRLEKLKKKADMLAGDDGMSEKEKAASISKLMASVAKKTRRAPIKVVKAAGSNKGLQGRPKGVKGRYKMVDPRMKKELRAMKRISKKK</sequence>
<evidence type="ECO:0000255" key="1">
    <source>
        <dbReference type="HAMAP-Rule" id="MF_03163"/>
    </source>
</evidence>
<evidence type="ECO:0000256" key="2">
    <source>
        <dbReference type="SAM" id="MobiDB-lite"/>
    </source>
</evidence>
<protein>
    <recommendedName>
        <fullName evidence="1">AdoMet-dependent rRNA methyltransferase spb1</fullName>
        <ecNumber evidence="1">2.1.1.-</ecNumber>
    </recommendedName>
    <alternativeName>
        <fullName evidence="1">2'-O-ribose RNA methyltransferase</fullName>
    </alternativeName>
    <alternativeName>
        <fullName evidence="1">S-adenosyl-L-methionine-dependent methyltransferase</fullName>
    </alternativeName>
</protein>
<comment type="function">
    <text evidence="1">Required for proper assembly of pre-ribosomal particles during the biogenesis of the 60S ribosomal subunit.</text>
</comment>
<comment type="catalytic activity">
    <reaction evidence="1">
        <text>a ribonucleotide in rRNA + S-adenosyl-L-methionine = a 2'-O-methylribonucleotide in rRNA + S-adenosyl-L-homocysteine + H(+)</text>
        <dbReference type="Rhea" id="RHEA:48628"/>
        <dbReference type="Rhea" id="RHEA-COMP:12164"/>
        <dbReference type="Rhea" id="RHEA-COMP:12165"/>
        <dbReference type="ChEBI" id="CHEBI:15378"/>
        <dbReference type="ChEBI" id="CHEBI:57856"/>
        <dbReference type="ChEBI" id="CHEBI:59789"/>
        <dbReference type="ChEBI" id="CHEBI:90675"/>
        <dbReference type="ChEBI" id="CHEBI:90676"/>
    </reaction>
</comment>
<comment type="subunit">
    <text evidence="1">Component of the nucleolar and nucleoplasmic pre-60S ribosomal particle.</text>
</comment>
<comment type="subcellular location">
    <subcellularLocation>
        <location evidence="1">Nucleus</location>
        <location evidence="1">Nucleolus</location>
    </subcellularLocation>
</comment>
<comment type="similarity">
    <text evidence="1">Belongs to the class I-like SAM-binding methyltransferase superfamily. RNA methyltransferase RlmE family. SPB1 subfamily.</text>
</comment>
<proteinExistence type="inferred from homology"/>
<organism>
    <name type="scientific">Neurospora crassa (strain ATCC 24698 / 74-OR23-1A / CBS 708.71 / DSM 1257 / FGSC 987)</name>
    <dbReference type="NCBI Taxonomy" id="367110"/>
    <lineage>
        <taxon>Eukaryota</taxon>
        <taxon>Fungi</taxon>
        <taxon>Dikarya</taxon>
        <taxon>Ascomycota</taxon>
        <taxon>Pezizomycotina</taxon>
        <taxon>Sordariomycetes</taxon>
        <taxon>Sordariomycetidae</taxon>
        <taxon>Sordariales</taxon>
        <taxon>Sordariaceae</taxon>
        <taxon>Neurospora</taxon>
    </lineage>
</organism>
<feature type="chain" id="PRO_0000155600" description="AdoMet-dependent rRNA methyltransferase spb1">
    <location>
        <begin position="1"/>
        <end position="831"/>
    </location>
</feature>
<feature type="region of interest" description="Disordered" evidence="2">
    <location>
        <begin position="442"/>
        <end position="556"/>
    </location>
</feature>
<feature type="region of interest" description="Disordered" evidence="2">
    <location>
        <begin position="569"/>
        <end position="644"/>
    </location>
</feature>
<feature type="region of interest" description="Disordered" evidence="2">
    <location>
        <begin position="790"/>
        <end position="816"/>
    </location>
</feature>
<feature type="coiled-coil region" evidence="1">
    <location>
        <begin position="349"/>
        <end position="396"/>
    </location>
</feature>
<feature type="compositionally biased region" description="Acidic residues" evidence="2">
    <location>
        <begin position="448"/>
        <end position="470"/>
    </location>
</feature>
<feature type="compositionally biased region" description="Basic and acidic residues" evidence="2">
    <location>
        <begin position="474"/>
        <end position="486"/>
    </location>
</feature>
<feature type="compositionally biased region" description="Acidic residues" evidence="2">
    <location>
        <begin position="496"/>
        <end position="533"/>
    </location>
</feature>
<feature type="compositionally biased region" description="Basic and acidic residues" evidence="2">
    <location>
        <begin position="534"/>
        <end position="554"/>
    </location>
</feature>
<feature type="compositionally biased region" description="Acidic residues" evidence="2">
    <location>
        <begin position="574"/>
        <end position="592"/>
    </location>
</feature>
<feature type="compositionally biased region" description="Basic and acidic residues" evidence="2">
    <location>
        <begin position="593"/>
        <end position="617"/>
    </location>
</feature>
<feature type="active site" description="Proton acceptor" evidence="1">
    <location>
        <position position="157"/>
    </location>
</feature>
<feature type="binding site" evidence="1">
    <location>
        <position position="56"/>
    </location>
    <ligand>
        <name>S-adenosyl-L-methionine</name>
        <dbReference type="ChEBI" id="CHEBI:59789"/>
    </ligand>
</feature>
<feature type="binding site" evidence="1">
    <location>
        <position position="58"/>
    </location>
    <ligand>
        <name>S-adenosyl-L-methionine</name>
        <dbReference type="ChEBI" id="CHEBI:59789"/>
    </ligand>
</feature>
<feature type="binding site" evidence="1">
    <location>
        <position position="76"/>
    </location>
    <ligand>
        <name>S-adenosyl-L-methionine</name>
        <dbReference type="ChEBI" id="CHEBI:59789"/>
    </ligand>
</feature>
<feature type="binding site" evidence="1">
    <location>
        <position position="92"/>
    </location>
    <ligand>
        <name>S-adenosyl-L-methionine</name>
        <dbReference type="ChEBI" id="CHEBI:59789"/>
    </ligand>
</feature>
<feature type="binding site" evidence="1">
    <location>
        <position position="117"/>
    </location>
    <ligand>
        <name>S-adenosyl-L-methionine</name>
        <dbReference type="ChEBI" id="CHEBI:59789"/>
    </ligand>
</feature>
<name>SPB1_NEUCR</name>